<proteinExistence type="inferred from homology"/>
<name>GATD_METKA</name>
<reference key="1">
    <citation type="journal article" date="2002" name="Proc. Natl. Acad. Sci. U.S.A.">
        <title>The complete genome of hyperthermophile Methanopyrus kandleri AV19 and monophyly of archaeal methanogens.</title>
        <authorList>
            <person name="Slesarev A.I."/>
            <person name="Mezhevaya K.V."/>
            <person name="Makarova K.S."/>
            <person name="Polushin N.N."/>
            <person name="Shcherbinina O.V."/>
            <person name="Shakhova V.V."/>
            <person name="Belova G.I."/>
            <person name="Aravind L."/>
            <person name="Natale D.A."/>
            <person name="Rogozin I.B."/>
            <person name="Tatusov R.L."/>
            <person name="Wolf Y.I."/>
            <person name="Stetter K.O."/>
            <person name="Malykh A.G."/>
            <person name="Koonin E.V."/>
            <person name="Kozyavkin S.A."/>
        </authorList>
    </citation>
    <scope>NUCLEOTIDE SEQUENCE [LARGE SCALE GENOMIC DNA]</scope>
    <source>
        <strain>AV19 / DSM 6324 / JCM 9639 / NBRC 100938</strain>
    </source>
</reference>
<accession>Q8TV84</accession>
<protein>
    <recommendedName>
        <fullName evidence="1">Glutamyl-tRNA(Gln) amidotransferase subunit D</fullName>
        <shortName evidence="1">Glu-ADT subunit D</shortName>
        <ecNumber evidence="1">6.3.5.-</ecNumber>
    </recommendedName>
</protein>
<sequence length="458" mass="50119">MRVLSEYKGKAGELLREHGLSVGDRVRIVRDDGVVVEGIIMPRSELGDDEHIVVKMDNGYNVGVRVDRIEKLEAPGEGHEPSFKPMEGEIEYDPKLPNVSVMSTGGTIACRVDYETGAVKPAFTAEELVGAVPELLDVINIVDARAVLDLLSENMEPKHWMKIAEEVVDALSDPDVEGVVIGHGTDTMAFTAAALSFVIEGLNGPVVLVGAQRSSDRPSSDAASNLIAACAFAGDGEVGEVTVCMHGWTSDEVCLVHRGVRVRKMHTSRRDAFRSVESIPIAKVDVKDLRNPKIEFLRSDYRRPEDGEPEISGGFEEKVALVKFAPGMDPEVLDFYVDRGYRGIVLEGTGLGHVSEQWLESIERAVDDGIAVVMTSQCLYGRVNMNVYRTGRLLRAVGVIPGEDMLPEVAYVKLMYVLDRTDDIKEVERLMRTNIAGEIEGGRVLGGFEPADGPHHRL</sequence>
<keyword id="KW-0067">ATP-binding</keyword>
<keyword id="KW-0436">Ligase</keyword>
<keyword id="KW-0547">Nucleotide-binding</keyword>
<keyword id="KW-0648">Protein biosynthesis</keyword>
<keyword id="KW-1185">Reference proteome</keyword>
<dbReference type="EC" id="6.3.5.-" evidence="1"/>
<dbReference type="EMBL" id="AE009439">
    <property type="protein sequence ID" value="AAM02722.1"/>
    <property type="molecule type" value="Genomic_DNA"/>
</dbReference>
<dbReference type="RefSeq" id="WP_011019877.1">
    <property type="nucleotide sequence ID" value="NC_003551.1"/>
</dbReference>
<dbReference type="SMR" id="Q8TV84"/>
<dbReference type="FunCoup" id="Q8TV84">
    <property type="interactions" value="41"/>
</dbReference>
<dbReference type="STRING" id="190192.MK1509"/>
<dbReference type="PaxDb" id="190192-MK1509"/>
<dbReference type="EnsemblBacteria" id="AAM02722">
    <property type="protein sequence ID" value="AAM02722"/>
    <property type="gene ID" value="MK1509"/>
</dbReference>
<dbReference type="GeneID" id="1478104"/>
<dbReference type="KEGG" id="mka:MK1509"/>
<dbReference type="PATRIC" id="fig|190192.8.peg.1667"/>
<dbReference type="HOGENOM" id="CLU_019134_2_1_2"/>
<dbReference type="InParanoid" id="Q8TV84"/>
<dbReference type="OrthoDB" id="371959at2157"/>
<dbReference type="Proteomes" id="UP000001826">
    <property type="component" value="Chromosome"/>
</dbReference>
<dbReference type="GO" id="GO:0004067">
    <property type="term" value="F:asparaginase activity"/>
    <property type="evidence" value="ECO:0007669"/>
    <property type="project" value="InterPro"/>
</dbReference>
<dbReference type="GO" id="GO:0005524">
    <property type="term" value="F:ATP binding"/>
    <property type="evidence" value="ECO:0007669"/>
    <property type="project" value="UniProtKB-KW"/>
</dbReference>
<dbReference type="GO" id="GO:0050567">
    <property type="term" value="F:glutaminyl-tRNA synthase (glutamine-hydrolyzing) activity"/>
    <property type="evidence" value="ECO:0007669"/>
    <property type="project" value="UniProtKB-UniRule"/>
</dbReference>
<dbReference type="GO" id="GO:0006520">
    <property type="term" value="P:amino acid metabolic process"/>
    <property type="evidence" value="ECO:0007669"/>
    <property type="project" value="InterPro"/>
</dbReference>
<dbReference type="GO" id="GO:0006450">
    <property type="term" value="P:regulation of translational fidelity"/>
    <property type="evidence" value="ECO:0007669"/>
    <property type="project" value="InterPro"/>
</dbReference>
<dbReference type="GO" id="GO:0006412">
    <property type="term" value="P:translation"/>
    <property type="evidence" value="ECO:0007669"/>
    <property type="project" value="UniProtKB-UniRule"/>
</dbReference>
<dbReference type="CDD" id="cd08962">
    <property type="entry name" value="GatD"/>
    <property type="match status" value="1"/>
</dbReference>
<dbReference type="Gene3D" id="2.30.30.520">
    <property type="match status" value="1"/>
</dbReference>
<dbReference type="Gene3D" id="3.40.50.40">
    <property type="match status" value="1"/>
</dbReference>
<dbReference type="Gene3D" id="3.40.50.1170">
    <property type="entry name" value="L-asparaginase, N-terminal domain"/>
    <property type="match status" value="1"/>
</dbReference>
<dbReference type="HAMAP" id="MF_00586">
    <property type="entry name" value="GatD"/>
    <property type="match status" value="1"/>
</dbReference>
<dbReference type="InterPro" id="IPR006033">
    <property type="entry name" value="AsnA_fam"/>
</dbReference>
<dbReference type="InterPro" id="IPR036152">
    <property type="entry name" value="Asp/glu_Ase-like_sf"/>
</dbReference>
<dbReference type="InterPro" id="IPR006034">
    <property type="entry name" value="Asparaginase/glutaminase-like"/>
</dbReference>
<dbReference type="InterPro" id="IPR020827">
    <property type="entry name" value="Asparaginase/glutaminase_AS1"/>
</dbReference>
<dbReference type="InterPro" id="IPR027475">
    <property type="entry name" value="Asparaginase/glutaminase_AS2"/>
</dbReference>
<dbReference type="InterPro" id="IPR040919">
    <property type="entry name" value="Asparaginase_C"/>
</dbReference>
<dbReference type="InterPro" id="IPR011878">
    <property type="entry name" value="GatD"/>
</dbReference>
<dbReference type="InterPro" id="IPR040918">
    <property type="entry name" value="GatD_N"/>
</dbReference>
<dbReference type="InterPro" id="IPR037222">
    <property type="entry name" value="GatD_N_sf"/>
</dbReference>
<dbReference type="InterPro" id="IPR027473">
    <property type="entry name" value="L-asparaginase_C"/>
</dbReference>
<dbReference type="InterPro" id="IPR027474">
    <property type="entry name" value="L-asparaginase_N"/>
</dbReference>
<dbReference type="InterPro" id="IPR037152">
    <property type="entry name" value="L-asparaginase_N_sf"/>
</dbReference>
<dbReference type="NCBIfam" id="TIGR00519">
    <property type="entry name" value="asnASE_I"/>
    <property type="match status" value="1"/>
</dbReference>
<dbReference type="NCBIfam" id="TIGR02153">
    <property type="entry name" value="gatD_arch"/>
    <property type="match status" value="1"/>
</dbReference>
<dbReference type="NCBIfam" id="NF003217">
    <property type="entry name" value="PRK04183.1"/>
    <property type="match status" value="1"/>
</dbReference>
<dbReference type="PANTHER" id="PTHR11707:SF28">
    <property type="entry name" value="60 KDA LYSOPHOSPHOLIPASE"/>
    <property type="match status" value="1"/>
</dbReference>
<dbReference type="PANTHER" id="PTHR11707">
    <property type="entry name" value="L-ASPARAGINASE"/>
    <property type="match status" value="1"/>
</dbReference>
<dbReference type="Pfam" id="PF00710">
    <property type="entry name" value="Asparaginase"/>
    <property type="match status" value="1"/>
</dbReference>
<dbReference type="Pfam" id="PF17763">
    <property type="entry name" value="Asparaginase_C"/>
    <property type="match status" value="1"/>
</dbReference>
<dbReference type="Pfam" id="PF18195">
    <property type="entry name" value="GatD_N"/>
    <property type="match status" value="1"/>
</dbReference>
<dbReference type="PIRSF" id="PIRSF500175">
    <property type="entry name" value="Glu_ADT_D"/>
    <property type="match status" value="1"/>
</dbReference>
<dbReference type="PIRSF" id="PIRSF001220">
    <property type="entry name" value="L-ASNase_gatD"/>
    <property type="match status" value="1"/>
</dbReference>
<dbReference type="PRINTS" id="PR00139">
    <property type="entry name" value="ASNGLNASE"/>
</dbReference>
<dbReference type="SMART" id="SM00870">
    <property type="entry name" value="Asparaginase"/>
    <property type="match status" value="1"/>
</dbReference>
<dbReference type="SUPFAM" id="SSF141300">
    <property type="entry name" value="GatD N-terminal domain-like"/>
    <property type="match status" value="1"/>
</dbReference>
<dbReference type="SUPFAM" id="SSF53774">
    <property type="entry name" value="Glutaminase/Asparaginase"/>
    <property type="match status" value="1"/>
</dbReference>
<dbReference type="PROSITE" id="PS00144">
    <property type="entry name" value="ASN_GLN_ASE_1"/>
    <property type="match status" value="1"/>
</dbReference>
<dbReference type="PROSITE" id="PS00917">
    <property type="entry name" value="ASN_GLN_ASE_2"/>
    <property type="match status" value="1"/>
</dbReference>
<dbReference type="PROSITE" id="PS51732">
    <property type="entry name" value="ASN_GLN_ASE_3"/>
    <property type="match status" value="1"/>
</dbReference>
<gene>
    <name evidence="1" type="primary">gatD</name>
    <name type="ordered locus">MK1509</name>
</gene>
<organism>
    <name type="scientific">Methanopyrus kandleri (strain AV19 / DSM 6324 / JCM 9639 / NBRC 100938)</name>
    <dbReference type="NCBI Taxonomy" id="190192"/>
    <lineage>
        <taxon>Archaea</taxon>
        <taxon>Methanobacteriati</taxon>
        <taxon>Methanobacteriota</taxon>
        <taxon>Methanomada group</taxon>
        <taxon>Methanopyri</taxon>
        <taxon>Methanopyrales</taxon>
        <taxon>Methanopyraceae</taxon>
        <taxon>Methanopyrus</taxon>
    </lineage>
</organism>
<feature type="chain" id="PRO_0000140053" description="Glutamyl-tRNA(Gln) amidotransferase subunit D">
    <location>
        <begin position="1"/>
        <end position="458"/>
    </location>
</feature>
<feature type="domain" description="Asparaginase/glutaminase" evidence="2">
    <location>
        <begin position="97"/>
        <end position="434"/>
    </location>
</feature>
<feature type="active site" evidence="1">
    <location>
        <position position="107"/>
    </location>
</feature>
<feature type="active site" evidence="1">
    <location>
        <position position="185"/>
    </location>
</feature>
<feature type="active site" evidence="1">
    <location>
        <position position="186"/>
    </location>
</feature>
<feature type="active site" evidence="1">
    <location>
        <position position="264"/>
    </location>
</feature>
<comment type="function">
    <text evidence="1">Allows the formation of correctly charged Gln-tRNA(Gln) through the transamidation of misacylated Glu-tRNA(Gln) in organisms which lack glutaminyl-tRNA synthetase. The reaction takes place in the presence of glutamine and ATP through an activated gamma-phospho-Glu-tRNA(Gln). The GatDE system is specific for glutamate and does not act on aspartate.</text>
</comment>
<comment type="catalytic activity">
    <reaction evidence="1">
        <text>L-glutamyl-tRNA(Gln) + L-glutamine + ATP + H2O = L-glutaminyl-tRNA(Gln) + L-glutamate + ADP + phosphate + H(+)</text>
        <dbReference type="Rhea" id="RHEA:17521"/>
        <dbReference type="Rhea" id="RHEA-COMP:9681"/>
        <dbReference type="Rhea" id="RHEA-COMP:9684"/>
        <dbReference type="ChEBI" id="CHEBI:15377"/>
        <dbReference type="ChEBI" id="CHEBI:15378"/>
        <dbReference type="ChEBI" id="CHEBI:29985"/>
        <dbReference type="ChEBI" id="CHEBI:30616"/>
        <dbReference type="ChEBI" id="CHEBI:43474"/>
        <dbReference type="ChEBI" id="CHEBI:58359"/>
        <dbReference type="ChEBI" id="CHEBI:78520"/>
        <dbReference type="ChEBI" id="CHEBI:78521"/>
        <dbReference type="ChEBI" id="CHEBI:456216"/>
    </reaction>
</comment>
<comment type="subunit">
    <text evidence="1">Heterodimer of GatD and GatE.</text>
</comment>
<comment type="similarity">
    <text evidence="1">Belongs to the asparaginase 1 family. GatD subfamily.</text>
</comment>
<evidence type="ECO:0000255" key="1">
    <source>
        <dbReference type="HAMAP-Rule" id="MF_00586"/>
    </source>
</evidence>
<evidence type="ECO:0000255" key="2">
    <source>
        <dbReference type="PROSITE-ProRule" id="PRU01068"/>
    </source>
</evidence>